<keyword id="KW-0002">3D-structure</keyword>
<keyword id="KW-1072">Activation of host autophagy by virus</keyword>
<keyword id="KW-0067">ATP-binding</keyword>
<keyword id="KW-0068">Autocatalytic cleavage</keyword>
<keyword id="KW-0167">Capsid protein</keyword>
<keyword id="KW-0191">Covalent protein-RNA linkage</keyword>
<keyword id="KW-0235">DNA replication</keyword>
<keyword id="KW-1262">Eukaryotic host gene expression shutoff by virus</keyword>
<keyword id="KW-1193">Eukaryotic host translation shutoff by virus</keyword>
<keyword id="KW-0347">Helicase</keyword>
<keyword id="KW-1035">Host cytoplasm</keyword>
<keyword id="KW-1036">Host cytoplasmic vesicle</keyword>
<keyword id="KW-1190">Host gene expression shutoff by virus</keyword>
<keyword id="KW-1043">Host membrane</keyword>
<keyword id="KW-1192">Host mRNA suppression by virus</keyword>
<keyword id="KW-1048">Host nucleus</keyword>
<keyword id="KW-0945">Host-virus interaction</keyword>
<keyword id="KW-0378">Hydrolase</keyword>
<keyword id="KW-1090">Inhibition of host innate immune response by virus</keyword>
<keyword id="KW-1099">Inhibition of host mRNA nuclear export by virus</keyword>
<keyword id="KW-1088">Inhibition of host RIG-I by virus</keyword>
<keyword id="KW-1113">Inhibition of host RLR pathway by virus</keyword>
<keyword id="KW-0407">Ion channel</keyword>
<keyword id="KW-0406">Ion transport</keyword>
<keyword id="KW-0449">Lipoprotein</keyword>
<keyword id="KW-0460">Magnesium</keyword>
<keyword id="KW-0472">Membrane</keyword>
<keyword id="KW-0479">Metal-binding</keyword>
<keyword id="KW-0519">Myristate</keyword>
<keyword id="KW-0547">Nucleotide-binding</keyword>
<keyword id="KW-0548">Nucleotidyltransferase</keyword>
<keyword id="KW-0597">Phosphoprotein</keyword>
<keyword id="KW-1172">Pore-mediated penetration of viral genome into host cell</keyword>
<keyword id="KW-0645">Protease</keyword>
<keyword id="KW-0677">Repeat</keyword>
<keyword id="KW-0694">RNA-binding</keyword>
<keyword id="KW-0696">RNA-directed RNA polymerase</keyword>
<keyword id="KW-1143">T=pseudo3 icosahedral capsid protein</keyword>
<keyword id="KW-0788">Thiol protease</keyword>
<keyword id="KW-0808">Transferase</keyword>
<keyword id="KW-0813">Transport</keyword>
<keyword id="KW-1161">Viral attachment to host cell</keyword>
<keyword id="KW-0899">Viral immunoevasion</keyword>
<keyword id="KW-1182">Viral ion channel</keyword>
<keyword id="KW-1162">Viral penetration into host cytoplasm</keyword>
<keyword id="KW-0693">Viral RNA replication</keyword>
<keyword id="KW-0946">Virion</keyword>
<keyword id="KW-1164">Virus endocytosis by host</keyword>
<keyword id="KW-1160">Virus entry into host cell</keyword>
<keyword id="KW-0862">Zinc</keyword>
<keyword id="KW-0863">Zinc-finger</keyword>
<reference key="1">
    <citation type="journal article" date="2009" name="Science">
        <title>Sequencing and analyses of all known human rhinovirus genomes reveal structure and evolution.</title>
        <authorList>
            <person name="Palmenberg A.C."/>
            <person name="Spiro D."/>
            <person name="Kuzmickas R."/>
            <person name="Wang S."/>
            <person name="Djikeng A."/>
            <person name="Rathe J.A."/>
            <person name="Fraser-Liggett C.M."/>
            <person name="Liggett S.B."/>
        </authorList>
    </citation>
    <scope>NUCLEOTIDE SEQUENCE [GENOMIC RNA]</scope>
    <source>
        <strain>ATCC VR-1559</strain>
    </source>
</reference>
<reference key="2">
    <citation type="journal article" date="1989" name="J. Mol. Biol.">
        <title>Crystal structure of human rhinovirus serotype 1A (HRV1A).</title>
        <authorList>
            <person name="Kim S."/>
            <person name="Smith T.J."/>
            <person name="Chapman M.S."/>
            <person name="Rossmann M.G."/>
            <person name="Pevear D."/>
            <person name="Dutko F.J."/>
            <person name="Felock P.J."/>
            <person name="Diana G.D."/>
            <person name="McKinlay M.A."/>
        </authorList>
    </citation>
    <scope>NUCLEOTIDE SEQUENCE OF 1-45 AND 70-857</scope>
    <scope>X-RAY CRYSTALLOGRAPHY (3.2 ANGSTROMS)</scope>
</reference>
<reference key="3">
    <citation type="journal article" date="2012" name="Adv. Virol.">
        <title>Productive entry pathways of human rhinoviruses.</title>
        <authorList>
            <person name="Fuchs R."/>
            <person name="Blaas D."/>
        </authorList>
    </citation>
    <scope>REVIEW</scope>
</reference>
<organismHost>
    <name type="scientific">Homo sapiens</name>
    <name type="common">Human</name>
    <dbReference type="NCBI Taxonomy" id="9606"/>
</organismHost>
<dbReference type="EC" id="3.4.22.29" evidence="2"/>
<dbReference type="EC" id="3.6.1.15" evidence="2"/>
<dbReference type="EC" id="3.4.22.28" evidence="11"/>
<dbReference type="EC" id="2.7.7.48" evidence="9"/>
<dbReference type="EMBL" id="FJ445111">
    <property type="protein sequence ID" value="ACK37367.1"/>
    <property type="molecule type" value="Genomic_RNA"/>
</dbReference>
<dbReference type="PDB" id="1AYM">
    <property type="method" value="X-ray"/>
    <property type="resolution" value="2.15 A"/>
    <property type="chains" value="4=2-69"/>
</dbReference>
<dbReference type="PDB" id="1AYN">
    <property type="method" value="X-ray"/>
    <property type="resolution" value="2.90 A"/>
    <property type="chains" value="4=2-69"/>
</dbReference>
<dbReference type="PDB" id="1R1A">
    <property type="method" value="X-ray"/>
    <property type="resolution" value="3.20 A"/>
    <property type="chains" value="1=571-857, 2=70-332, 3=333-570, 4=2-45"/>
</dbReference>
<dbReference type="PDB" id="2HWD">
    <property type="method" value="X-ray"/>
    <property type="resolution" value="3.80 A"/>
    <property type="chains" value="1=571-857, 2=70-332, 3=333-570, 4=2-45"/>
</dbReference>
<dbReference type="PDB" id="2HWE">
    <property type="method" value="X-ray"/>
    <property type="resolution" value="3.80 A"/>
    <property type="chains" value="1=571-857, 2=70-332, 3=333-570, 4=2-45"/>
</dbReference>
<dbReference type="PDB" id="2HWF">
    <property type="method" value="X-ray"/>
    <property type="resolution" value="3.80 A"/>
    <property type="chains" value="1=571-857, 2=70-332, 3=333-570, 4=2-45"/>
</dbReference>
<dbReference type="PDBsum" id="1AYM"/>
<dbReference type="PDBsum" id="1AYN"/>
<dbReference type="PDBsum" id="1R1A"/>
<dbReference type="PDBsum" id="2HWD"/>
<dbReference type="PDBsum" id="2HWE"/>
<dbReference type="PDBsum" id="2HWF"/>
<dbReference type="SMR" id="P23008"/>
<dbReference type="DrugBank" id="DB08017">
    <property type="generic name" value="3-METHOXY-6-[4-(3-METHYLPHENYL)-1-PIPERAZINYL]PYRIDAZINE"/>
</dbReference>
<dbReference type="DrugBank" id="DB08728">
    <property type="generic name" value="5-(3-(2,6-dichloro-4-(4,5-dihydro-2-oxazolyl)phenoxy)propyl)-3-methyl isoxazole"/>
</dbReference>
<dbReference type="DrugBank" id="DB03017">
    <property type="generic name" value="Lauric acid"/>
</dbReference>
<dbReference type="DrugBank" id="DB08231">
    <property type="generic name" value="Myristic acid"/>
</dbReference>
<dbReference type="DrugBank" id="DB08012">
    <property type="generic name" value="Pirodavir"/>
</dbReference>
<dbReference type="DrugBank" id="DB08723">
    <property type="generic name" value="WIN-54954"/>
</dbReference>
<dbReference type="MEROPS" id="C03.007"/>
<dbReference type="TCDB" id="1.A.85.1.7">
    <property type="family name" value="the poliovirus 2b viroporin (2b viroporin) family"/>
</dbReference>
<dbReference type="EvolutionaryTrace" id="P23008"/>
<dbReference type="Proteomes" id="UP000013736">
    <property type="component" value="Segment"/>
</dbReference>
<dbReference type="GO" id="GO:0044162">
    <property type="term" value="C:host cell cytoplasmic vesicle membrane"/>
    <property type="evidence" value="ECO:0007669"/>
    <property type="project" value="UniProtKB-SubCell"/>
</dbReference>
<dbReference type="GO" id="GO:0042025">
    <property type="term" value="C:host cell nucleus"/>
    <property type="evidence" value="ECO:0007669"/>
    <property type="project" value="UniProtKB-SubCell"/>
</dbReference>
<dbReference type="GO" id="GO:0016020">
    <property type="term" value="C:membrane"/>
    <property type="evidence" value="ECO:0007669"/>
    <property type="project" value="UniProtKB-KW"/>
</dbReference>
<dbReference type="GO" id="GO:0039618">
    <property type="term" value="C:T=pseudo3 icosahedral viral capsid"/>
    <property type="evidence" value="ECO:0007669"/>
    <property type="project" value="UniProtKB-KW"/>
</dbReference>
<dbReference type="GO" id="GO:0005524">
    <property type="term" value="F:ATP binding"/>
    <property type="evidence" value="ECO:0007669"/>
    <property type="project" value="UniProtKB-KW"/>
</dbReference>
<dbReference type="GO" id="GO:0016887">
    <property type="term" value="F:ATP hydrolysis activity"/>
    <property type="evidence" value="ECO:0007669"/>
    <property type="project" value="InterPro"/>
</dbReference>
<dbReference type="GO" id="GO:0015267">
    <property type="term" value="F:channel activity"/>
    <property type="evidence" value="ECO:0007669"/>
    <property type="project" value="UniProtKB-KW"/>
</dbReference>
<dbReference type="GO" id="GO:0004197">
    <property type="term" value="F:cysteine-type endopeptidase activity"/>
    <property type="evidence" value="ECO:0007669"/>
    <property type="project" value="UniProtKB-EC"/>
</dbReference>
<dbReference type="GO" id="GO:0003723">
    <property type="term" value="F:RNA binding"/>
    <property type="evidence" value="ECO:0007669"/>
    <property type="project" value="UniProtKB-KW"/>
</dbReference>
<dbReference type="GO" id="GO:0003724">
    <property type="term" value="F:RNA helicase activity"/>
    <property type="evidence" value="ECO:0007669"/>
    <property type="project" value="InterPro"/>
</dbReference>
<dbReference type="GO" id="GO:0003968">
    <property type="term" value="F:RNA-directed RNA polymerase activity"/>
    <property type="evidence" value="ECO:0007669"/>
    <property type="project" value="UniProtKB-KW"/>
</dbReference>
<dbReference type="GO" id="GO:0005198">
    <property type="term" value="F:structural molecule activity"/>
    <property type="evidence" value="ECO:0007669"/>
    <property type="project" value="InterPro"/>
</dbReference>
<dbReference type="GO" id="GO:0008270">
    <property type="term" value="F:zinc ion binding"/>
    <property type="evidence" value="ECO:0007669"/>
    <property type="project" value="UniProtKB-KW"/>
</dbReference>
<dbReference type="GO" id="GO:0006260">
    <property type="term" value="P:DNA replication"/>
    <property type="evidence" value="ECO:0007669"/>
    <property type="project" value="UniProtKB-KW"/>
</dbReference>
<dbReference type="GO" id="GO:0006351">
    <property type="term" value="P:DNA-templated transcription"/>
    <property type="evidence" value="ECO:0007669"/>
    <property type="project" value="InterPro"/>
</dbReference>
<dbReference type="GO" id="GO:0075509">
    <property type="term" value="P:endocytosis involved in viral entry into host cell"/>
    <property type="evidence" value="ECO:0007669"/>
    <property type="project" value="UniProtKB-KW"/>
</dbReference>
<dbReference type="GO" id="GO:0034220">
    <property type="term" value="P:monoatomic ion transmembrane transport"/>
    <property type="evidence" value="ECO:0007669"/>
    <property type="project" value="UniProtKB-KW"/>
</dbReference>
<dbReference type="GO" id="GO:0006508">
    <property type="term" value="P:proteolysis"/>
    <property type="evidence" value="ECO:0007669"/>
    <property type="project" value="UniProtKB-KW"/>
</dbReference>
<dbReference type="GO" id="GO:0044694">
    <property type="term" value="P:symbiont genome entry into host cell via pore formation in plasma membrane"/>
    <property type="evidence" value="ECO:0007669"/>
    <property type="project" value="UniProtKB-KW"/>
</dbReference>
<dbReference type="GO" id="GO:0039520">
    <property type="term" value="P:symbiont-mediated activation of host autophagy"/>
    <property type="evidence" value="ECO:0007669"/>
    <property type="project" value="UniProtKB-KW"/>
</dbReference>
<dbReference type="GO" id="GO:0039540">
    <property type="term" value="P:symbiont-mediated suppression of host cytoplasmic pattern recognition receptor signaling pathway via inhibition of RIG-I activity"/>
    <property type="evidence" value="ECO:0000314"/>
    <property type="project" value="UniProtKB"/>
</dbReference>
<dbReference type="GO" id="GO:0039522">
    <property type="term" value="P:symbiont-mediated suppression of host mRNA export from nucleus"/>
    <property type="evidence" value="ECO:0007669"/>
    <property type="project" value="UniProtKB-KW"/>
</dbReference>
<dbReference type="GO" id="GO:0039694">
    <property type="term" value="P:viral RNA genome replication"/>
    <property type="evidence" value="ECO:0007669"/>
    <property type="project" value="InterPro"/>
</dbReference>
<dbReference type="GO" id="GO:0019062">
    <property type="term" value="P:virion attachment to host cell"/>
    <property type="evidence" value="ECO:0007669"/>
    <property type="project" value="UniProtKB-KW"/>
</dbReference>
<dbReference type="CDD" id="cd00205">
    <property type="entry name" value="rhv_like"/>
    <property type="match status" value="3"/>
</dbReference>
<dbReference type="FunFam" id="2.40.10.10:FF:000020">
    <property type="entry name" value="Genome polyprotein"/>
    <property type="match status" value="1"/>
</dbReference>
<dbReference type="FunFam" id="2.60.120.20:FF:000001">
    <property type="entry name" value="Genome polyprotein"/>
    <property type="match status" value="1"/>
</dbReference>
<dbReference type="FunFam" id="2.60.120.20:FF:000002">
    <property type="entry name" value="Genome polyprotein"/>
    <property type="match status" value="1"/>
</dbReference>
<dbReference type="FunFam" id="2.60.120.20:FF:000003">
    <property type="entry name" value="Genome polyprotein"/>
    <property type="match status" value="1"/>
</dbReference>
<dbReference type="FunFam" id="4.10.880.10:FF:000002">
    <property type="entry name" value="Genome polyprotein"/>
    <property type="match status" value="1"/>
</dbReference>
<dbReference type="Gene3D" id="1.20.960.20">
    <property type="match status" value="1"/>
</dbReference>
<dbReference type="Gene3D" id="2.60.120.20">
    <property type="match status" value="3"/>
</dbReference>
<dbReference type="Gene3D" id="3.30.70.270">
    <property type="match status" value="1"/>
</dbReference>
<dbReference type="Gene3D" id="3.40.50.300">
    <property type="entry name" value="P-loop containing nucleotide triphosphate hydrolases"/>
    <property type="match status" value="1"/>
</dbReference>
<dbReference type="Gene3D" id="6.10.20.20">
    <property type="entry name" value="Poliovirus 3A protein-like"/>
    <property type="match status" value="1"/>
</dbReference>
<dbReference type="Gene3D" id="4.10.880.10">
    <property type="entry name" value="Poliovirus 3D polymerase Domain 1 (Nucleotidyltransferase)"/>
    <property type="match status" value="2"/>
</dbReference>
<dbReference type="Gene3D" id="2.40.10.10">
    <property type="entry name" value="Trypsin-like serine proteases"/>
    <property type="match status" value="4"/>
</dbReference>
<dbReference type="InterPro" id="IPR003593">
    <property type="entry name" value="AAA+_ATPase"/>
</dbReference>
<dbReference type="InterPro" id="IPR043502">
    <property type="entry name" value="DNA/RNA_pol_sf"/>
</dbReference>
<dbReference type="InterPro" id="IPR000605">
    <property type="entry name" value="Helicase_SF3_ssDNA/RNA_vir"/>
</dbReference>
<dbReference type="InterPro" id="IPR014759">
    <property type="entry name" value="Helicase_SF3_ssRNA_vir"/>
</dbReference>
<dbReference type="InterPro" id="IPR027417">
    <property type="entry name" value="P-loop_NTPase"/>
</dbReference>
<dbReference type="InterPro" id="IPR014838">
    <property type="entry name" value="P3A"/>
</dbReference>
<dbReference type="InterPro" id="IPR036203">
    <property type="entry name" value="P3A_soluble_dom"/>
</dbReference>
<dbReference type="InterPro" id="IPR044067">
    <property type="entry name" value="PCV_3C_PRO"/>
</dbReference>
<dbReference type="InterPro" id="IPR000081">
    <property type="entry name" value="Peptidase_C3"/>
</dbReference>
<dbReference type="InterPro" id="IPR000199">
    <property type="entry name" value="Peptidase_C3A/C3B_picornavir"/>
</dbReference>
<dbReference type="InterPro" id="IPR009003">
    <property type="entry name" value="Peptidase_S1_PA"/>
</dbReference>
<dbReference type="InterPro" id="IPR043504">
    <property type="entry name" value="Peptidase_S1_PA_chymotrypsin"/>
</dbReference>
<dbReference type="InterPro" id="IPR003138">
    <property type="entry name" value="Pico_P1A"/>
</dbReference>
<dbReference type="InterPro" id="IPR002527">
    <property type="entry name" value="Pico_P2B"/>
</dbReference>
<dbReference type="InterPro" id="IPR001676">
    <property type="entry name" value="Picornavirus_capsid"/>
</dbReference>
<dbReference type="InterPro" id="IPR043128">
    <property type="entry name" value="Rev_trsase/Diguanyl_cyclase"/>
</dbReference>
<dbReference type="InterPro" id="IPR033703">
    <property type="entry name" value="Rhv-like"/>
</dbReference>
<dbReference type="InterPro" id="IPR001205">
    <property type="entry name" value="RNA-dir_pol_C"/>
</dbReference>
<dbReference type="InterPro" id="IPR007094">
    <property type="entry name" value="RNA-dir_pol_PSvirus"/>
</dbReference>
<dbReference type="InterPro" id="IPR029053">
    <property type="entry name" value="Viral_coat"/>
</dbReference>
<dbReference type="Pfam" id="PF08727">
    <property type="entry name" value="P3A"/>
    <property type="match status" value="1"/>
</dbReference>
<dbReference type="Pfam" id="PF00548">
    <property type="entry name" value="Peptidase_C3"/>
    <property type="match status" value="1"/>
</dbReference>
<dbReference type="Pfam" id="PF02226">
    <property type="entry name" value="Pico_P1A"/>
    <property type="match status" value="1"/>
</dbReference>
<dbReference type="Pfam" id="PF00947">
    <property type="entry name" value="Pico_P2A"/>
    <property type="match status" value="1"/>
</dbReference>
<dbReference type="Pfam" id="PF01552">
    <property type="entry name" value="Pico_P2B"/>
    <property type="match status" value="1"/>
</dbReference>
<dbReference type="Pfam" id="PF00680">
    <property type="entry name" value="RdRP_1"/>
    <property type="match status" value="1"/>
</dbReference>
<dbReference type="Pfam" id="PF00073">
    <property type="entry name" value="Rhv"/>
    <property type="match status" value="3"/>
</dbReference>
<dbReference type="Pfam" id="PF00910">
    <property type="entry name" value="RNA_helicase"/>
    <property type="match status" value="1"/>
</dbReference>
<dbReference type="SMART" id="SM00382">
    <property type="entry name" value="AAA"/>
    <property type="match status" value="1"/>
</dbReference>
<dbReference type="SUPFAM" id="SSF56672">
    <property type="entry name" value="DNA/RNA polymerases"/>
    <property type="match status" value="1"/>
</dbReference>
<dbReference type="SUPFAM" id="SSF52540">
    <property type="entry name" value="P-loop containing nucleoside triphosphate hydrolases"/>
    <property type="match status" value="1"/>
</dbReference>
<dbReference type="SUPFAM" id="SSF88633">
    <property type="entry name" value="Positive stranded ssRNA viruses"/>
    <property type="match status" value="2"/>
</dbReference>
<dbReference type="SUPFAM" id="SSF89043">
    <property type="entry name" value="Soluble domain of poliovirus core protein 3a"/>
    <property type="match status" value="1"/>
</dbReference>
<dbReference type="SUPFAM" id="SSF50494">
    <property type="entry name" value="Trypsin-like serine proteases"/>
    <property type="match status" value="2"/>
</dbReference>
<dbReference type="PROSITE" id="PS51874">
    <property type="entry name" value="PCV_3C_PRO"/>
    <property type="match status" value="1"/>
</dbReference>
<dbReference type="PROSITE" id="PS50507">
    <property type="entry name" value="RDRP_SSRNA_POS"/>
    <property type="match status" value="1"/>
</dbReference>
<dbReference type="PROSITE" id="PS51218">
    <property type="entry name" value="SF3_HELICASE_2"/>
    <property type="match status" value="1"/>
</dbReference>
<organism>
    <name type="scientific">Human rhinovirus 1A</name>
    <name type="common">HRV-1A</name>
    <dbReference type="NCBI Taxonomy" id="12134"/>
    <lineage>
        <taxon>Viruses</taxon>
        <taxon>Riboviria</taxon>
        <taxon>Orthornavirae</taxon>
        <taxon>Pisuviricota</taxon>
        <taxon>Pisoniviricetes</taxon>
        <taxon>Picornavirales</taxon>
        <taxon>Picornaviridae</taxon>
        <taxon>Ensavirinae</taxon>
        <taxon>Enterovirus</taxon>
        <taxon>Rhinovirus A</taxon>
    </lineage>
</organism>
<accession>P23008</accession>
<accession>B9V432</accession>
<sequence length="2157" mass="242487">MGAQVSRQNVGTHSTQNSVSNGSSLNYFNINYFKDAASSGASRLDFSQDPSKFTDPVKDVLEKGIPTLQSPSVEACGYSDRIMQITRGDSTITSQDVANAVVGYGVWPHYLTPQDATAIDKPTQPDTSSNRFYTLESKHWNGSSKGWWWKLPDALKDMGIFGENMYYHFLGRSGYTVHVQCNASKFHQGTLLVAMIPEHQLASAKHGSVTAGYKLTHPGEAGRDVSQERDASLRQPSDDSWLNFDGTLLGNLLIFPHQFINLRSNNSATLIVPYVNAVPMDSMLRHNNWSLVIIPISPLRSETTSSNIVPITVSISPMCAEFSGARAKNIKQGLPVYITPGSGQFMTTDDMQSPCALPWYHPTKEISIPGEVKNLIEMCQVDTLIPVNNVGNNVGNVSMYTVQLGNQTGMAQKVFSIKVDITSQPLATTLIGEIASYYTHWTGSLRFSFMFCGTANTTLKLLLAYTPPGIDEPTTRKDAMLGTHVVWDVGLQSTISLVVPWVSASHFRLTADNKYSMAGYITCWYQTNLVVPPSTPQTADMLCFVSACKDFCLRMARDTDLHIQSGPIEQNPVENYIDEVLNEVLVVPNIKESHHTTSNSAPLLDAAETGHTSNVQPEDAIETRYVITSQTRDEMSIESFLGRSGCVHISRIKVDYTDYNGQDINFTKWKITLQEMAQIRRKFELFTYVRFDSEITLVPCIAGRGDDIGHIVMQYMYVPPGAPIPSKRNDFSWQSGTNMSIFWQHGQPFPRFSLPFLSIASAYYMFYDGYDGDNTSSKYGSVVTNDMGTICSRIVTEKQKHSVVITTHIYHKAKHTKAWCPRPPRAVPYTHSHVTNYMPETGDVTTAIVRRNTITTAGPSDLYVHVGNLIYRNLHLFNSEMHDSILISYSSDLIIYRTNTIGDDYIPNCNCTEATYYCRHKNRYYPIKVTPHDWYEIQESEYYPKHIQYNLLIGEGPCEPGDCGGKLLCRHGVIGIITAGGEGHVAFIDLRQFHCAEEQGITDYIHMLGEAFGNGFVDSVKEQINAINPINNISKKVIKWLLRIISAMVIIIRNSSDPQTIIATLTLIGCNGSPWRFLKEKFCKWTQLTYIHKESDSWLKKFTEMCNAARGLEWIGNKISKFIDWMKSMLPQAQLKVKYLNEIKKLSLLEKQIENLRAADSATQEKIKCEIDTLHDLSCKFLPLYAHEAKRIKVLYNKCSNIIKQRKRSEPVAVMIHGPPGTGKSITTNFLARMITNESDVYSLPPDPKYFDGYDNQSVVIMDDIMQNPDGEDMTLFCQMVSSVTFIPPMADLPDKGKPFDSRFILCSTNHSLLAPPTISSLPAMNRRFFFDLDIVVHDNYKDTQGKLDVSKAFRPCNVNTKIGNAKCCPFVCGKAVXFKDRSTCSTYTLAQVYNHILEEDKRRRQVVDVMSAIFQGPISLDXPPPPAIXDLLQSVRTPEVIKYCQDNKWVIPAECQVERDLNIANSIIAIIANIISIAGIIFVIYKLFCSLQGPYSGEPKPKTKVPERRVVAQGPEEEFGRSILKNNTCVITTGNGKFTGLGIHDRILIIPTHADPGREVQVNGVHTKVLDSYDLYNRDGVKLEITVIQLDRNEKFRDIRKYIPETEDDYPECNLALSANQDEPTIIKVGDVVSYGNILLSGNQTARMLKYNYPTKSGYCGGVLYKIGQILGIHVGGNGRDGFSAMLLRSYFTDTQGQIKVNKHATECGLPTIHTPSKTKLQPSVFYDVFPGSKEPAVLTDNDPRLEVNFKEALFSKYKGNVECNLNEHMEIAIAHYSAQLMTLDIDSRPIALEDSVFGIEGLEALDLNTSAGFPYVTMGIKKRDLINNKTKDISRLKEALDKYGVDLPMITFLKDELRKKEKISTGKTRVIEASSINDTILFRTTFGNLFSKFHLNPGVVTGSAVGCDPETFWSKIPVMLDGDCIMAFDYTNYDGSIHPVWFQALKKVLENLSFQSNLIDRLCYSKHLFKSTYYEVAGGVPSGCSGTSIFNTMINNIIIRTLVLDAYKNIDLDKLKIIAYGDDVIFSYKYTLDMEAIANEGKKYGLTITPADKSNEFKKLDYSNVTFLKRGFKQDERHTFLIHPTFPVEEIHESIRWTKKPSQMQEHVLSLCHLMWHNGRKVYEDFSSKIRSVSAGRALYIPPYDLLKHEWYEKF</sequence>
<comment type="function">
    <molecule>Capsid protein VP1</molecule>
    <text evidence="2">Forms an icosahedral capsid of pseudo T=3 symmetry with capsid proteins VP2 and VP3 (By similarity). The capsid is 300 Angstroms in diameter, composed of 60 copies of each capsid protein and enclosing the viral positive strand RNA genome (By similarity). Capsid protein VP1 mainly forms the vertices of the capsid (By similarity). Capsid protein VP1 interacts with host cell receptor to provide virion attachment to target host cells (By similarity). This attachment induces virion internalization (By similarity). Tyrosine kinases are probably involved in the entry process (By similarity). After binding to its receptor, the capsid undergoes conformational changes (By similarity). Capsid protein VP1 N-terminus (that contains an amphipathic alpha-helix) and capsid protein VP4 are externalized (By similarity). Together, they shape a pore in the host membrane through which viral genome is translocated to host cell cytoplasm (By similarity).</text>
</comment>
<comment type="function">
    <molecule>Capsid protein VP2</molecule>
    <text evidence="2">Forms an icosahedral capsid of pseudo T=3 symmetry with capsid proteins VP2 and VP3 (By similarity). The capsid is 300 Angstroms in diameter, composed of 60 copies of each capsid protein and enclosing the viral positive strand RNA genome (By similarity).</text>
</comment>
<comment type="function">
    <molecule>Capsid protein VP3</molecule>
    <text evidence="2">Forms an icosahedral capsid of pseudo T=3 symmetry with capsid proteins VP2 and VP3 (By similarity). The capsid is 300 Angstroms in diameter, composed of 60 copies of each capsid protein and enclosing the viral positive strand RNA genome (By similarity).</text>
</comment>
<comment type="function">
    <molecule>Capsid protein VP4</molecule>
    <text evidence="2">Lies on the inner surface of the capsid shell (By similarity). After binding to the host receptor, the capsid undergoes conformational changes (By similarity). Capsid protein VP4 is released, Capsid protein VP1 N-terminus is externalized, and together, they shape a pore in the host membrane through which the viral genome is translocated into the host cell cytoplasm (By similarity).</text>
</comment>
<comment type="function">
    <molecule>Capsid protein VP0</molecule>
    <text evidence="2">Component of immature procapsids, which is cleaved into capsid proteins VP4 and VP2 after maturation (By similarity). Allows the capsid to remain inactive before the maturation step (By similarity).</text>
</comment>
<comment type="function">
    <molecule>Protease 2A</molecule>
    <text evidence="2 3 5">Cysteine protease that cleaves viral polyprotein and specific host proteins (By similarity). It is responsible for the autocatalytic cleavage between the P1 and P2 regions, which is the first cleavage occurring in the polyprotein (By similarity). Also cleaves the host translation initiation factor EIF4G1, in order to shut down the capped cellular mRNA translation (By similarity). Inhibits the host nucleus-cytoplasm protein and RNA trafficking by cleaving host members of the nuclear pores (By similarity). Counteracts stress granule formation probably by antagonizing its assembly or promoting its dissassembly (By similarity).</text>
</comment>
<comment type="function">
    <molecule>Protein 2B</molecule>
    <text evidence="2">Plays an essential role in the virus replication cycle by acting as a viroporin. Creates a pore in the host endoplasmic reticulum and as a consequence releases Ca2+ in the cytoplasm of infected cell. In turn, high levels of cytoplasmic calcium may trigger membrane trafficking and transport of viral ER-associated proteins to viroplasms, sites of viral genome replication.</text>
</comment>
<comment type="function">
    <molecule>Protein 2C</molecule>
    <text evidence="2">Induces and associates with structural rearrangements of intracellular membranes. Displays RNA-binding, nucleotide binding and NTPase activities. May play a role in virion morphogenesis and viral RNA encapsidation by interacting with the capsid protein VP3.</text>
</comment>
<comment type="function">
    <molecule>Protein 3AB</molecule>
    <text evidence="2">Localizes the viral replication complex to the surface of membranous vesicles. Together with protein 3CD binds the Cis-Active RNA Element (CRE) which is involved in RNA synthesis initiation. Acts as a cofactor to stimulate the activity of 3D polymerase, maybe through a nucleid acid chaperone activity.</text>
</comment>
<comment type="function">
    <molecule>Protein 3A</molecule>
    <text evidence="2 5">Localizes the viral replication complex to the surface of membranous vesicles (By similarity). It inhibits host cell endoplasmic reticulum-to-Golgi apparatus transport and causes the disassembly of the Golgi complex, possibly through GBF1 interaction (By similarity). This would result in depletion of MHC, trail receptors and IFN receptors at the host cell surface (By similarity). Plays an essential role in viral RNA replication by recruiting ACBD3 and PI4KB at the viral replication sites, thereby allowing the formation of the rearranged membranous structures where viral replication takes place (By similarity).</text>
</comment>
<comment type="function">
    <molecule>Viral protein genome-linked</molecule>
    <text evidence="2">Acts as a primer for viral RNA replication and remains covalently bound to viral genomic RNA. VPg is uridylylated prior to priming replication into VPg-pUpU. The oriI viral genomic sequence may act as a template for this. The VPg-pUpU is then used as primer on the genomic RNA poly(A) by the RNA-dependent RNA polymerase to replicate the viral genome. During genome replication, the VPg-RNA linkage is removed by the host TDP2, thereby accelerating replication. During the late stage of the replication cycle, host TDP2 is excluded from sites of viral RNA synthesis and encapsidation, allowing for the generation of progeny virions.</text>
</comment>
<comment type="function">
    <molecule>Protein 3CD</molecule>
    <text evidence="2">Involved in the viral replication complex and viral polypeptide maturation. It exhibits protease activity with a specificity and catalytic efficiency that is different from protease 3C. Protein 3CD lacks polymerase activity. Protein 3CD binds to the 5'UTR of the viral genome.</text>
</comment>
<comment type="function">
    <molecule>Protease 3C</molecule>
    <text evidence="2 4">Major viral protease that mediates proteolytic processing of the polyprotein (By similarity). Cleaves host EIF5B, contributing to host translation shutoff (By similarity). Also cleaves host PABPC1, contributing to host translation shutoff (By similarity).</text>
</comment>
<comment type="function">
    <molecule>RNA-directed RNA polymerase</molecule>
    <text evidence="2">Replicates the viral genomic RNA on the surface of intracellular membranes. May form linear arrays of subunits that propagate along a strong head-to-tail interaction called interface-I. Covalently attaches UMP to a tyrosine of VPg, which is used to prime RNA synthesis. The positive stranded RNA genome is first replicated at virus induced membranous vesicles, creating a dsRNA genomic replication form. This dsRNA is then used as template to synthesize positive stranded RNA genomes. ss(+)RNA genomes are either translated, replicated or encapsidated.</text>
</comment>
<comment type="catalytic activity">
    <molecule>Protein 2C</molecule>
    <reaction evidence="2">
        <text>a ribonucleoside 5'-triphosphate + H2O = a ribonucleoside 5'-diphosphate + phosphate + H(+)</text>
        <dbReference type="Rhea" id="RHEA:23680"/>
        <dbReference type="ChEBI" id="CHEBI:15377"/>
        <dbReference type="ChEBI" id="CHEBI:15378"/>
        <dbReference type="ChEBI" id="CHEBI:43474"/>
        <dbReference type="ChEBI" id="CHEBI:57930"/>
        <dbReference type="ChEBI" id="CHEBI:61557"/>
        <dbReference type="EC" id="3.6.1.15"/>
    </reaction>
</comment>
<comment type="catalytic activity">
    <molecule>Protease 2A</molecule>
    <reaction evidence="2">
        <text>Selective cleavage of Tyr-|-Gly bond in the picornavirus polyprotein.</text>
        <dbReference type="EC" id="3.4.22.29"/>
    </reaction>
</comment>
<comment type="catalytic activity">
    <molecule>RNA-directed RNA polymerase</molecule>
    <reaction evidence="9">
        <text>RNA(n) + a ribonucleoside 5'-triphosphate = RNA(n+1) + diphosphate</text>
        <dbReference type="Rhea" id="RHEA:21248"/>
        <dbReference type="Rhea" id="RHEA-COMP:14527"/>
        <dbReference type="Rhea" id="RHEA-COMP:17342"/>
        <dbReference type="ChEBI" id="CHEBI:33019"/>
        <dbReference type="ChEBI" id="CHEBI:61557"/>
        <dbReference type="ChEBI" id="CHEBI:140395"/>
        <dbReference type="EC" id="2.7.7.48"/>
    </reaction>
</comment>
<comment type="catalytic activity">
    <molecule>Protease 3C</molecule>
    <reaction evidence="11">
        <text>Selective cleavage of Gln-|-Gly bond in the poliovirus polyprotein. In other picornavirus reactions Glu may be substituted for Gln, and Ser or Thr for Gly.</text>
        <dbReference type="EC" id="3.4.22.28"/>
    </reaction>
</comment>
<comment type="cofactor">
    <molecule>RNA-directed RNA polymerase</molecule>
    <cofactor evidence="2">
        <name>Mg(2+)</name>
        <dbReference type="ChEBI" id="CHEBI:18420"/>
    </cofactor>
    <text evidence="2 4">Binds 2 magnesium ions that constitute a dinuclear catalytic metal center (By similarity). The magnesium ions are not prebound but only present for catalysis (By similarity). Requires the presence of 3CDpro or 3CPro (By similarity).</text>
</comment>
<comment type="activity regulation">
    <molecule>RNA-directed RNA polymerase</molecule>
    <text evidence="2">Replication or transcription is subject to high level of random mutations by the nucleotide analog ribavirin.</text>
</comment>
<comment type="subunit">
    <molecule>Capsid protein VP0</molecule>
    <text evidence="2">Interacts with capsid protein VP1 and capsid protein VP3 to form heterotrimeric protomers.</text>
</comment>
<comment type="subunit">
    <molecule>Capsid protein VP1</molecule>
    <text evidence="2">Interacts with capsid protein VP0, and capsid protein VP3 to form heterotrimeric protomers (By similarity). Five protomers subsequently associate to form pentamers which serve as building blocks for the capsid (By similarity). Interacts with capsid protein VP2, capsid protein VP3 and capsid protein VP4 following cleavage of capsid protein VP0 (By similarity).</text>
</comment>
<comment type="subunit">
    <molecule>Capsid protein VP2</molecule>
    <text evidence="2">Interacts with capsid protein VP1 and capsid protein VP3 in the mature capsid.</text>
</comment>
<comment type="subunit">
    <molecule>Capsid protein VP3</molecule>
    <text evidence="2">Interacts with capsid protein VP0 and capsid protein VP1 to form heterotrimeric protomers (By similarity). Five protomers subsequently associate to form pentamers which serve as building blocks for the capsid (By similarity). Interacts with capsid protein VP4 in the mature capsid (By similarity). Interacts with protein 2C; this interaction may be important for virion morphogenesis (By similarity).</text>
</comment>
<comment type="subunit">
    <molecule>Capsid protein VP4</molecule>
    <text evidence="2">Interacts with capsid protein VP1 and capsid protein VP3.</text>
</comment>
<comment type="subunit">
    <molecule>Protease 2A</molecule>
    <text evidence="5">Homodimer.</text>
</comment>
<comment type="subunit">
    <molecule>Protein 2C</molecule>
    <text evidence="2">Homohexamer; forms a hexameric ring structure with 6-fold symmetry characteristic of AAA+ ATPases (By similarity). Interacts (via N-terminus) with host RTN3 (via reticulon domain); this interaction is important for viral replication (By similarity). Interacts with capsid protein VP3; this interaction may be important for virion morphogenesis (By similarity).</text>
</comment>
<comment type="subunit">
    <molecule>Protein 3AB</molecule>
    <text evidence="2">Interacts with protein 3CD.</text>
</comment>
<comment type="subunit">
    <molecule>Protein 3A</molecule>
    <text evidence="2">Homodimer (By similarity). Interacts with host GBF1 (By similarity). Interacts (via GOLD domain) with host ACBD3 (via GOLD domain); this interaction allows the formation of a viral protein 3A/ACBD3 heterotetramer with a 2:2 stoichiometry, which will stimulate the recruitment of host PI4KB in order to synthesize PI4P at the viral RNA replication sites (By similarity).</text>
</comment>
<comment type="subunit">
    <molecule>Viral protein genome-linked</molecule>
    <text evidence="2">Interacts with RNA-directed RNA polymerase.</text>
</comment>
<comment type="subunit">
    <molecule>Protein 3CD</molecule>
    <text evidence="2">Interacts with protein 3AB and with RNA-directed RNA polymerase.</text>
</comment>
<comment type="subunit">
    <molecule>RNA-directed RNA polymerase</molecule>
    <text evidence="2">Interacts with Viral protein genome-linked and with protein 3CD.</text>
</comment>
<comment type="subcellular location">
    <molecule>Capsid protein VP0</molecule>
    <subcellularLocation>
        <location>Virion</location>
    </subcellularLocation>
    <subcellularLocation>
        <location evidence="12">Host cytoplasm</location>
    </subcellularLocation>
</comment>
<comment type="subcellular location">
    <molecule>Capsid protein VP4</molecule>
    <subcellularLocation>
        <location>Virion</location>
    </subcellularLocation>
</comment>
<comment type="subcellular location">
    <molecule>Capsid protein VP2</molecule>
    <subcellularLocation>
        <location evidence="2">Virion</location>
    </subcellularLocation>
    <subcellularLocation>
        <location evidence="12">Host cytoplasm</location>
    </subcellularLocation>
</comment>
<comment type="subcellular location">
    <molecule>Capsid protein VP3</molecule>
    <subcellularLocation>
        <location evidence="2">Virion</location>
    </subcellularLocation>
    <subcellularLocation>
        <location evidence="12">Host cytoplasm</location>
    </subcellularLocation>
</comment>
<comment type="subcellular location">
    <molecule>Capsid protein VP1</molecule>
    <subcellularLocation>
        <location evidence="2">Virion</location>
    </subcellularLocation>
    <subcellularLocation>
        <location evidence="12">Host cytoplasm</location>
    </subcellularLocation>
</comment>
<comment type="subcellular location">
    <molecule>Protein 2B</molecule>
    <subcellularLocation>
        <location evidence="12">Host cytoplasmic vesicle membrane</location>
        <topology evidence="12">Peripheral membrane protein</topology>
        <orientation evidence="12">Cytoplasmic side</orientation>
    </subcellularLocation>
    <text>Probably localizes to the surface of intracellular membrane vesicles that are induced after virus infection as the site for viral RNA replication. These vesicles are derived from the endoplasmic reticulum.</text>
</comment>
<comment type="subcellular location">
    <molecule>Protein 2C</molecule>
    <subcellularLocation>
        <location evidence="12">Host cytoplasmic vesicle membrane</location>
        <topology evidence="12">Peripheral membrane protein</topology>
        <orientation evidence="12">Cytoplasmic side</orientation>
    </subcellularLocation>
    <text>Probably localizes to the surface of intracellular membrane vesicles that are induced after virus infection as the site for viral RNA replication. These vesicles are derived from the endoplasmic reticulum.</text>
</comment>
<comment type="subcellular location">
    <molecule>Protein 3A</molecule>
    <subcellularLocation>
        <location evidence="12">Host cytoplasmic vesicle membrane</location>
        <topology evidence="12">Peripheral membrane protein</topology>
        <orientation evidence="12">Cytoplasmic side</orientation>
    </subcellularLocation>
    <text>Probably localizes to the surface of intracellular membrane vesicles that are induced after virus infection as the site for viral RNA replication. These vesicles are derived from the endoplasmic reticulum.</text>
</comment>
<comment type="subcellular location">
    <molecule>Protein 3AB</molecule>
    <subcellularLocation>
        <location evidence="12">Host cytoplasmic vesicle membrane</location>
        <topology evidence="12">Peripheral membrane protein</topology>
        <orientation evidence="12">Cytoplasmic side</orientation>
    </subcellularLocation>
    <text>Probably localizes to the surface of intracellular membrane vesicles that are induced after virus infection as the site for viral RNA replication. These vesicles are derived from the endoplasmic reticulum.</text>
</comment>
<comment type="subcellular location">
    <molecule>Viral protein genome-linked</molecule>
    <subcellularLocation>
        <location evidence="2">Virion</location>
    </subcellularLocation>
    <subcellularLocation>
        <location evidence="6">Host cytoplasm</location>
    </subcellularLocation>
</comment>
<comment type="subcellular location">
    <molecule>Protease 3C</molecule>
    <subcellularLocation>
        <location>Host cytoplasm</location>
    </subcellularLocation>
</comment>
<comment type="subcellular location">
    <molecule>Protein 3CD</molecule>
    <subcellularLocation>
        <location evidence="2">Host nucleus</location>
    </subcellularLocation>
    <subcellularLocation>
        <location evidence="2">Host cytoplasm</location>
    </subcellularLocation>
    <subcellularLocation>
        <location evidence="12">Host cytoplasmic vesicle membrane</location>
        <topology evidence="12">Peripheral membrane protein</topology>
        <orientation evidence="12">Cytoplasmic side</orientation>
    </subcellularLocation>
    <text>Probably localizes to the surface of intracellular membrane vesicles that are induced after virus infection as the site for viral RNA replication. These vesicles are derived from the endoplasmic reticulum.</text>
</comment>
<comment type="subcellular location">
    <molecule>RNA-directed RNA polymerase</molecule>
    <subcellularLocation>
        <location evidence="12">Host cytoplasmic vesicle membrane</location>
        <topology evidence="12">Peripheral membrane protein</topology>
        <orientation evidence="12">Cytoplasmic side</orientation>
    </subcellularLocation>
    <text>Probably localizes to the surface of intracellular membrane vesicles that are induced after virus infection as the site for viral RNA replication. These vesicles are derived from the endoplasmic reticulum.</text>
</comment>
<comment type="domain">
    <molecule>Protein 2C</molecule>
    <text evidence="1 2">The N-terminus has membrane-binding (By similarity). The N-terminus also displays RNA-binding properties (By similarity). The N-terminus is involved in oligomerization (By similarity). The central part contains an ATPase domain and a degenerate C4-type zinc-finger with only 3 cysteines (By similarity). The C-terminus is involved in RNA-binding (By similarity). The extreme C-terminus contains a region involved in oligomerization (By similarity).</text>
</comment>
<comment type="PTM">
    <molecule>Genome polyprotein</molecule>
    <text evidence="2">Specific enzymatic cleavages in vivo by the viral proteases yield processing intermediates and the mature proteins.</text>
</comment>
<comment type="PTM">
    <molecule>Capsid protein VP0</molecule>
    <text evidence="2">Myristoylation is required for the formation of pentamers during virus assembly. Further assembly of 12 pentamers and a molecule of genomic RNA generates the provirion.</text>
</comment>
<comment type="PTM">
    <molecule>Capsid protein VP0</molecule>
    <text evidence="2">During virion maturation, immature virions are rendered infectious following cleavage of VP0 into VP4 and VP2. This maturation seems to be an autocatalytic event triggered by the presence of RNA in the capsid and it is followed by a conformational change infectious virion.</text>
</comment>
<comment type="PTM">
    <molecule>Capsid protein VP4</molecule>
    <text evidence="2">Myristoylation is required during RNA encapsidation and formation of the mature virus particle.</text>
</comment>
<comment type="PTM">
    <molecule>Viral protein genome-linked</molecule>
    <text evidence="2">VPg is uridylylated by the polymerase into VPg-pUpU. This acts as a nucleotide-peptide primer for the genomic RNA replication.</text>
</comment>
<comment type="similarity">
    <text evidence="12">Belongs to the picornaviruses polyprotein family.</text>
</comment>
<comment type="online information" name="Virus Particle ExploreR db">
    <link uri="https://viperdb.org/Info_Page.php?VDB=2hwd"/>
    <text>Icosahedral capsid structure in complex with antiviral compound Win56291</text>
</comment>
<comment type="online information" name="Virus Particle ExploreR db">
    <link uri="https://viperdb.org/Info_Page.php?VDB=2hwe"/>
    <text>Icosahedral capsid structure in complex with antiviral compound Win54954</text>
</comment>
<comment type="online information" name="Virus Particle ExploreR db">
    <link uri="https://viperdb.org/Info_Page.php?VDB=2hwf"/>
    <text>Icosahedral capsid structure in complex with antiviral compound R61837</text>
</comment>
<comment type="online information" name="Virus Particle ExploreR db">
    <link uri="https://viperdb.org/Info_Page.php?VDB=1r1a"/>
    <text>Icosahedral capsid structure</text>
</comment>
<feature type="initiator methionine" description="Removed; by host" evidence="2">
    <location>
        <position position="1"/>
    </location>
</feature>
<feature type="chain" id="PRO_0000426476" description="Genome polyprotein">
    <location>
        <begin position="2"/>
        <end position="2157"/>
    </location>
</feature>
<feature type="chain" id="PRO_0000426477" description="P1">
    <location>
        <begin position="2"/>
        <end position="857"/>
    </location>
</feature>
<feature type="chain" id="PRO_0000426478" description="Capsid protein VP0">
    <location>
        <begin position="2"/>
        <end position="332"/>
    </location>
</feature>
<feature type="chain" id="PRO_0000426479" description="Capsid protein VP4">
    <location>
        <begin position="2"/>
        <end position="69"/>
    </location>
</feature>
<feature type="chain" id="PRO_0000426480" description="Capsid protein VP2">
    <location>
        <begin position="70"/>
        <end position="332"/>
    </location>
</feature>
<feature type="chain" id="PRO_0000426481" description="Capsid protein VP3">
    <location>
        <begin position="333"/>
        <end position="564"/>
    </location>
</feature>
<feature type="chain" id="PRO_0000426482" description="Capsid protein VP1">
    <location>
        <begin position="565"/>
        <end position="857"/>
    </location>
</feature>
<feature type="chain" id="PRO_0000426483" description="P2">
    <location>
        <begin position="858"/>
        <end position="1416"/>
    </location>
</feature>
<feature type="chain" id="PRO_0000426484" description="Protease 2A">
    <location>
        <begin position="858"/>
        <end position="999"/>
    </location>
</feature>
<feature type="chain" id="PRO_5000438367" description="Protein 2B">
    <location>
        <begin position="1000"/>
        <end position="1094"/>
    </location>
</feature>
<feature type="chain" id="PRO_5000438368" description="Protein 2C">
    <location>
        <begin position="1095"/>
        <end position="1416"/>
    </location>
</feature>
<feature type="chain" id="PRO_0000426485" description="P3">
    <location>
        <begin position="1417"/>
        <end position="2157"/>
    </location>
</feature>
<feature type="chain" id="PRO_0000426486" description="Protein 3AB">
    <location>
        <begin position="1417"/>
        <end position="1514"/>
    </location>
</feature>
<feature type="chain" id="PRO_5000438369" description="Protein 3A">
    <location>
        <begin position="1417"/>
        <end position="1493"/>
    </location>
</feature>
<feature type="chain" id="PRO_0000426487" description="Viral protein genome-linked">
    <location>
        <begin position="1494"/>
        <end position="1514"/>
    </location>
</feature>
<feature type="chain" id="PRO_0000426488" description="Protein 3CD">
    <location>
        <begin position="1515"/>
        <end position="2157"/>
    </location>
</feature>
<feature type="chain" id="PRO_0000426489" description="Protease 3C">
    <location>
        <begin position="1515"/>
        <end position="1697"/>
    </location>
</feature>
<feature type="chain" id="PRO_0000426490" description="RNA-directed RNA polymerase">
    <location>
        <begin position="1698"/>
        <end position="2157"/>
    </location>
</feature>
<feature type="topological domain" description="Cytoplasmic" evidence="8">
    <location>
        <begin position="2"/>
        <end position="1470"/>
    </location>
</feature>
<feature type="intramembrane region" evidence="8">
    <location>
        <begin position="1471"/>
        <end position="1486"/>
    </location>
</feature>
<feature type="topological domain" description="Cytoplasmic" evidence="8">
    <location>
        <begin position="1487"/>
        <end position="2157"/>
    </location>
</feature>
<feature type="domain" description="SF3 helicase" evidence="10">
    <location>
        <begin position="1188"/>
        <end position="1350"/>
    </location>
</feature>
<feature type="domain" description="Peptidase C3" evidence="11">
    <location>
        <begin position="1515"/>
        <end position="1693"/>
    </location>
</feature>
<feature type="domain" description="RdRp catalytic" evidence="9">
    <location>
        <begin position="1925"/>
        <end position="2038"/>
    </location>
</feature>
<feature type="zinc finger region" description="C4-type; degenerate" evidence="1">
    <location>
        <begin position="1357"/>
        <end position="1373"/>
    </location>
</feature>
<feature type="region of interest" description="Amphipathic alpha-helix" evidence="8">
    <location>
        <begin position="567"/>
        <end position="584"/>
    </location>
</feature>
<feature type="region of interest" description="Oligomerization" evidence="2">
    <location>
        <begin position="1095"/>
        <end position="1228"/>
    </location>
</feature>
<feature type="region of interest" description="Membrane-binding" evidence="2">
    <location>
        <begin position="1095"/>
        <end position="1164"/>
    </location>
</feature>
<feature type="region of interest" description="RNA-binding" evidence="2">
    <location>
        <begin position="1116"/>
        <end position="1120"/>
    </location>
</feature>
<feature type="region of interest" description="RNA-binding" evidence="2">
    <location>
        <begin position="1400"/>
        <end position="1407"/>
    </location>
</feature>
<feature type="region of interest" description="Oligomerization" evidence="2">
    <location>
        <begin position="1411"/>
        <end position="1416"/>
    </location>
</feature>
<feature type="active site" description="For protease 2A activity" evidence="2">
    <location>
        <position position="875"/>
    </location>
</feature>
<feature type="active site" description="For protease 2A activity" evidence="2">
    <location>
        <position position="892"/>
    </location>
</feature>
<feature type="active site" description="For protease 2A activity" evidence="2">
    <location>
        <position position="963"/>
    </location>
</feature>
<feature type="active site" description="For protease 3C activity" evidence="11">
    <location>
        <position position="1554"/>
    </location>
</feature>
<feature type="active site" description="For protease 3C activity" evidence="11">
    <location>
        <position position="1585"/>
    </location>
</feature>
<feature type="active site" description="For protease 3C activity" evidence="11">
    <location>
        <position position="1661"/>
    </location>
</feature>
<feature type="binding site" evidence="7">
    <location>
        <position position="909"/>
    </location>
    <ligand>
        <name>Zn(2+)</name>
        <dbReference type="ChEBI" id="CHEBI:29105"/>
        <label>1</label>
        <note>structural</note>
    </ligand>
</feature>
<feature type="binding site" evidence="7">
    <location>
        <position position="911"/>
    </location>
    <ligand>
        <name>Zn(2+)</name>
        <dbReference type="ChEBI" id="CHEBI:29105"/>
        <label>1</label>
        <note>structural</note>
    </ligand>
</feature>
<feature type="binding site" evidence="7">
    <location>
        <position position="969"/>
    </location>
    <ligand>
        <name>Zn(2+)</name>
        <dbReference type="ChEBI" id="CHEBI:29105"/>
        <label>1</label>
        <note>structural</note>
    </ligand>
</feature>
<feature type="binding site" evidence="7">
    <location>
        <position position="971"/>
    </location>
    <ligand>
        <name>Zn(2+)</name>
        <dbReference type="ChEBI" id="CHEBI:29105"/>
        <label>1</label>
        <note>structural</note>
    </ligand>
</feature>
<feature type="binding site" evidence="1">
    <location>
        <position position="1357"/>
    </location>
    <ligand>
        <name>Zn(2+)</name>
        <dbReference type="ChEBI" id="CHEBI:29105"/>
        <label>2</label>
    </ligand>
</feature>
<feature type="binding site" evidence="1">
    <location>
        <position position="1368"/>
    </location>
    <ligand>
        <name>Zn(2+)</name>
        <dbReference type="ChEBI" id="CHEBI:29105"/>
        <label>2</label>
    </ligand>
</feature>
<feature type="binding site" evidence="1">
    <location>
        <position position="1373"/>
    </location>
    <ligand>
        <name>Zn(2+)</name>
        <dbReference type="ChEBI" id="CHEBI:29105"/>
        <label>2</label>
    </ligand>
</feature>
<feature type="binding site" evidence="2">
    <location>
        <position position="1931"/>
    </location>
    <ligand>
        <name>Mg(2+)</name>
        <dbReference type="ChEBI" id="CHEBI:18420"/>
        <label>1</label>
        <note>catalytic; for RdRp activity</note>
    </ligand>
</feature>
<feature type="binding site" evidence="2">
    <location>
        <position position="1931"/>
    </location>
    <ligand>
        <name>Mg(2+)</name>
        <dbReference type="ChEBI" id="CHEBI:18420"/>
        <label>2</label>
        <note>catalytic; for RdRp activity</note>
    </ligand>
</feature>
<feature type="binding site" evidence="2">
    <location>
        <position position="2024"/>
    </location>
    <ligand>
        <name>Mg(2+)</name>
        <dbReference type="ChEBI" id="CHEBI:18420"/>
        <label>1</label>
        <note>catalytic; for RdRp activity</note>
    </ligand>
</feature>
<feature type="binding site" evidence="2">
    <location>
        <position position="2024"/>
    </location>
    <ligand>
        <name>Mg(2+)</name>
        <dbReference type="ChEBI" id="CHEBI:18420"/>
        <label>2</label>
        <note>catalytic; for RdRp activity</note>
    </ligand>
</feature>
<feature type="site" description="Cleavage; by autolysis" evidence="2">
    <location>
        <begin position="69"/>
        <end position="70"/>
    </location>
</feature>
<feature type="site" description="Cleavage; by protease 3C" evidence="3">
    <location>
        <begin position="332"/>
        <end position="333"/>
    </location>
</feature>
<feature type="site" description="Cleavage; by autolysis" evidence="3">
    <location>
        <begin position="857"/>
        <end position="858"/>
    </location>
</feature>
<feature type="site" description="Cleavage; by protease 3C" evidence="3">
    <location>
        <begin position="999"/>
        <end position="1000"/>
    </location>
</feature>
<feature type="site" description="Cleavage; by protease 3C" evidence="3">
    <location>
        <begin position="1094"/>
        <end position="1095"/>
    </location>
</feature>
<feature type="site" description="Involved in the interaction with host RTN3" evidence="6">
    <location>
        <position position="1119"/>
    </location>
</feature>
<feature type="site" description="Cleavage; by protease 3C" evidence="3">
    <location>
        <begin position="1416"/>
        <end position="1417"/>
    </location>
</feature>
<feature type="site" description="Cleavage; by protease 3C" evidence="3">
    <location>
        <begin position="1493"/>
        <end position="1494"/>
    </location>
</feature>
<feature type="site" description="Cleavage; by protease 3C" evidence="3">
    <location>
        <begin position="1514"/>
        <end position="1515"/>
    </location>
</feature>
<feature type="site" description="Cleavage; by protease 3C" evidence="3">
    <location>
        <begin position="1697"/>
        <end position="1698"/>
    </location>
</feature>
<feature type="modified residue" description="O-(5'-phospho-RNA)-tyrosine" evidence="2">
    <location>
        <position position="1496"/>
    </location>
</feature>
<feature type="lipid moiety-binding region" description="N-myristoyl glycine; by host" evidence="2">
    <location>
        <position position="2"/>
    </location>
</feature>
<feature type="sequence variant">
    <original>Q</original>
    <variation>G</variation>
    <location>
        <position position="4"/>
    </location>
</feature>
<feature type="sequence variant">
    <original>TSQ</original>
    <variation>SSD</variation>
    <location>
        <begin position="93"/>
        <end position="95"/>
    </location>
</feature>
<feature type="sequence variant">
    <original>D</original>
    <variation>N</variation>
    <location>
        <position position="120"/>
    </location>
</feature>
<feature type="sequence variant">
    <original>S</original>
    <variation>C</variation>
    <location>
        <position position="290"/>
    </location>
</feature>
<feature type="sequence variant">
    <original>Q</original>
    <variation>T</variation>
    <location>
        <position position="424"/>
    </location>
</feature>
<feature type="sequence variant">
    <original>L</original>
    <variation>I</variation>
    <location>
        <position position="754"/>
    </location>
</feature>
<feature type="sequence variant">
    <original>H</original>
    <variation>L</variation>
    <location>
        <position position="801"/>
    </location>
</feature>
<feature type="strand" evidence="13">
    <location>
        <begin position="3"/>
        <end position="6"/>
    </location>
</feature>
<feature type="strand" evidence="13">
    <location>
        <begin position="27"/>
        <end position="30"/>
    </location>
</feature>
<feature type="strand" evidence="13">
    <location>
        <begin position="33"/>
        <end position="35"/>
    </location>
</feature>
<feature type="helix" evidence="13">
    <location>
        <begin position="36"/>
        <end position="38"/>
    </location>
</feature>
<feature type="strand" evidence="14">
    <location>
        <begin position="83"/>
        <end position="86"/>
    </location>
</feature>
<feature type="strand" evidence="14">
    <location>
        <begin position="91"/>
        <end position="96"/>
    </location>
</feature>
<feature type="helix" evidence="14">
    <location>
        <begin position="103"/>
        <end position="105"/>
    </location>
</feature>
<feature type="turn" evidence="14">
    <location>
        <begin position="113"/>
        <end position="115"/>
    </location>
</feature>
<feature type="strand" evidence="14">
    <location>
        <begin position="127"/>
        <end position="131"/>
    </location>
</feature>
<feature type="strand" evidence="14">
    <location>
        <begin position="146"/>
        <end position="150"/>
    </location>
</feature>
<feature type="helix" evidence="14">
    <location>
        <begin position="151"/>
        <end position="154"/>
    </location>
</feature>
<feature type="strand" evidence="14">
    <location>
        <begin position="156"/>
        <end position="158"/>
    </location>
</feature>
<feature type="helix" evidence="14">
    <location>
        <begin position="161"/>
        <end position="164"/>
    </location>
</feature>
<feature type="strand" evidence="14">
    <location>
        <begin position="167"/>
        <end position="180"/>
    </location>
</feature>
<feature type="strand" evidence="14">
    <location>
        <begin position="190"/>
        <end position="198"/>
    </location>
</feature>
<feature type="strand" evidence="14">
    <location>
        <begin position="203"/>
        <end position="208"/>
    </location>
</feature>
<feature type="turn" evidence="14">
    <location>
        <begin position="214"/>
        <end position="216"/>
    </location>
</feature>
<feature type="strand" evidence="14">
    <location>
        <begin position="223"/>
        <end position="226"/>
    </location>
</feature>
<feature type="strand" evidence="14">
    <location>
        <begin position="231"/>
        <end position="233"/>
    </location>
</feature>
<feature type="turn" evidence="14">
    <location>
        <begin position="240"/>
        <end position="246"/>
    </location>
</feature>
<feature type="helix" evidence="14">
    <location>
        <begin position="252"/>
        <end position="254"/>
    </location>
</feature>
<feature type="strand" evidence="14">
    <location>
        <begin position="255"/>
        <end position="261"/>
    </location>
</feature>
<feature type="turn" evidence="14">
    <location>
        <begin position="262"/>
        <end position="264"/>
    </location>
</feature>
<feature type="strand" evidence="14">
    <location>
        <begin position="266"/>
        <end position="272"/>
    </location>
</feature>
<feature type="strand" evidence="14">
    <location>
        <begin position="276"/>
        <end position="282"/>
    </location>
</feature>
<feature type="turn" evidence="14">
    <location>
        <begin position="283"/>
        <end position="285"/>
    </location>
</feature>
<feature type="strand" evidence="14">
    <location>
        <begin position="289"/>
        <end position="297"/>
    </location>
</feature>
<feature type="strand" evidence="14">
    <location>
        <begin position="310"/>
        <end position="325"/>
    </location>
</feature>
<feature type="turn" evidence="14">
    <location>
        <begin position="340"/>
        <end position="343"/>
    </location>
</feature>
<feature type="strand" evidence="14">
    <location>
        <begin position="355"/>
        <end position="357"/>
    </location>
</feature>
<feature type="helix" evidence="14">
    <location>
        <begin position="375"/>
        <end position="379"/>
    </location>
</feature>
<feature type="helix" evidence="14">
    <location>
        <begin position="391"/>
        <end position="393"/>
    </location>
</feature>
<feature type="helix" evidence="14">
    <location>
        <begin position="398"/>
        <end position="400"/>
    </location>
</feature>
<feature type="strand" evidence="14">
    <location>
        <begin position="401"/>
        <end position="404"/>
    </location>
</feature>
<feature type="strand" evidence="14">
    <location>
        <begin position="408"/>
        <end position="411"/>
    </location>
</feature>
<feature type="strand" evidence="14">
    <location>
        <begin position="413"/>
        <end position="418"/>
    </location>
</feature>
<feature type="strand" evidence="14">
    <location>
        <begin position="421"/>
        <end position="423"/>
    </location>
</feature>
<feature type="helix" evidence="14">
    <location>
        <begin position="432"/>
        <end position="435"/>
    </location>
</feature>
<feature type="strand" evidence="14">
    <location>
        <begin position="438"/>
        <end position="443"/>
    </location>
</feature>
<feature type="strand" evidence="14">
    <location>
        <begin position="445"/>
        <end position="451"/>
    </location>
</feature>
<feature type="strand" evidence="14">
    <location>
        <begin position="458"/>
        <end position="466"/>
    </location>
</feature>
<feature type="helix" evidence="14">
    <location>
        <begin position="476"/>
        <end position="480"/>
    </location>
</feature>
<feature type="strand" evidence="14">
    <location>
        <begin position="482"/>
        <end position="488"/>
    </location>
</feature>
<feature type="strand" evidence="14">
    <location>
        <begin position="490"/>
        <end position="492"/>
    </location>
</feature>
<feature type="strand" evidence="14">
    <location>
        <begin position="494"/>
        <end position="499"/>
    </location>
</feature>
<feature type="strand" evidence="14">
    <location>
        <begin position="504"/>
        <end position="511"/>
    </location>
</feature>
<feature type="strand" evidence="14">
    <location>
        <begin position="520"/>
        <end position="530"/>
    </location>
</feature>
<feature type="strand" evidence="14">
    <location>
        <begin position="533"/>
        <end position="535"/>
    </location>
</feature>
<feature type="strand" evidence="14">
    <location>
        <begin position="539"/>
        <end position="547"/>
    </location>
</feature>
<feature type="strand" evidence="14">
    <location>
        <begin position="552"/>
        <end position="556"/>
    </location>
</feature>
<feature type="helix" evidence="14">
    <location>
        <begin position="576"/>
        <end position="580"/>
    </location>
</feature>
<feature type="strand" evidence="14">
    <location>
        <begin position="584"/>
        <end position="586"/>
    </location>
</feature>
<feature type="helix" evidence="14">
    <location>
        <begin position="607"/>
        <end position="609"/>
    </location>
</feature>
<feature type="helix" evidence="14">
    <location>
        <begin position="617"/>
        <end position="620"/>
    </location>
</feature>
<feature type="strand" evidence="14">
    <location>
        <begin position="633"/>
        <end position="636"/>
    </location>
</feature>
<feature type="helix" evidence="14">
    <location>
        <begin position="637"/>
        <end position="641"/>
    </location>
</feature>
<feature type="strand" evidence="14">
    <location>
        <begin position="645"/>
        <end position="653"/>
    </location>
</feature>
<feature type="strand" evidence="14">
    <location>
        <begin position="656"/>
        <end position="660"/>
    </location>
</feature>
<feature type="strand" evidence="14">
    <location>
        <begin position="667"/>
        <end position="670"/>
    </location>
</feature>
<feature type="helix" evidence="14">
    <location>
        <begin position="679"/>
        <end position="683"/>
    </location>
</feature>
<feature type="strand" evidence="14">
    <location>
        <begin position="686"/>
        <end position="703"/>
    </location>
</feature>
<feature type="strand" evidence="14">
    <location>
        <begin position="713"/>
        <end position="718"/>
    </location>
</feature>
<feature type="strand" evidence="14">
    <location>
        <begin position="720"/>
        <end position="722"/>
    </location>
</feature>
<feature type="strand" evidence="14">
    <location>
        <begin position="726"/>
        <end position="729"/>
    </location>
</feature>
<feature type="helix" evidence="14">
    <location>
        <begin position="732"/>
        <end position="734"/>
    </location>
</feature>
<feature type="strand" evidence="14">
    <location>
        <begin position="738"/>
        <end position="743"/>
    </location>
</feature>
<feature type="strand" evidence="14">
    <location>
        <begin position="751"/>
        <end position="754"/>
    </location>
</feature>
<feature type="strand" evidence="14">
    <location>
        <begin position="759"/>
        <end position="765"/>
    </location>
</feature>
<feature type="strand" evidence="14">
    <location>
        <begin position="789"/>
        <end position="793"/>
    </location>
</feature>
<feature type="strand" evidence="14">
    <location>
        <begin position="803"/>
        <end position="821"/>
    </location>
</feature>
<feature type="strand" evidence="14">
    <location>
        <begin position="831"/>
        <end position="834"/>
    </location>
</feature>
<feature type="strand" evidence="14">
    <location>
        <begin position="840"/>
        <end position="842"/>
    </location>
</feature>
<proteinExistence type="evidence at protein level"/>
<protein>
    <recommendedName>
        <fullName>Genome polyprotein</fullName>
    </recommendedName>
    <component>
        <recommendedName>
            <fullName>P1</fullName>
        </recommendedName>
    </component>
    <component>
        <recommendedName>
            <fullName>Capsid protein VP0</fullName>
        </recommendedName>
        <alternativeName>
            <fullName>VP4-VP2</fullName>
        </alternativeName>
    </component>
    <component>
        <recommendedName>
            <fullName>Capsid protein VP4</fullName>
        </recommendedName>
        <alternativeName>
            <fullName>P1A</fullName>
        </alternativeName>
        <alternativeName>
            <fullName>Virion protein 4</fullName>
        </alternativeName>
    </component>
    <component>
        <recommendedName>
            <fullName>Capsid protein VP2</fullName>
        </recommendedName>
        <alternativeName>
            <fullName>P1B</fullName>
        </alternativeName>
        <alternativeName>
            <fullName>Virion protein 2</fullName>
        </alternativeName>
    </component>
    <component>
        <recommendedName>
            <fullName>Capsid protein VP3</fullName>
        </recommendedName>
        <alternativeName>
            <fullName>P1C</fullName>
        </alternativeName>
        <alternativeName>
            <fullName>Virion protein 3</fullName>
        </alternativeName>
    </component>
    <component>
        <recommendedName>
            <fullName>Capsid protein VP1</fullName>
        </recommendedName>
        <alternativeName>
            <fullName>P1D</fullName>
        </alternativeName>
        <alternativeName>
            <fullName>Virion protein 1</fullName>
        </alternativeName>
    </component>
    <component>
        <recommendedName>
            <fullName>P2</fullName>
        </recommendedName>
    </component>
    <component>
        <recommendedName>
            <fullName>Protease 2A</fullName>
            <shortName>P2A</shortName>
            <ecNumber evidence="2">3.4.22.29</ecNumber>
        </recommendedName>
        <alternativeName>
            <fullName>Picornain 2A</fullName>
        </alternativeName>
        <alternativeName>
            <fullName>Protein 2A</fullName>
        </alternativeName>
    </component>
    <component>
        <recommendedName>
            <fullName>Protein 2B</fullName>
            <shortName>P2B</shortName>
        </recommendedName>
    </component>
    <component>
        <recommendedName>
            <fullName>Protein 2C</fullName>
            <shortName>P2C</shortName>
            <ecNumber evidence="2">3.6.1.15</ecNumber>
        </recommendedName>
    </component>
    <component>
        <recommendedName>
            <fullName>P3</fullName>
        </recommendedName>
    </component>
    <component>
        <recommendedName>
            <fullName>Protein 3AB</fullName>
        </recommendedName>
    </component>
    <component>
        <recommendedName>
            <fullName>Protein 3A</fullName>
            <shortName>P3A</shortName>
        </recommendedName>
    </component>
    <component>
        <recommendedName>
            <fullName>Viral protein genome-linked</fullName>
            <shortName>VPg</shortName>
        </recommendedName>
        <alternativeName>
            <fullName>Protein 3B</fullName>
            <shortName>P3B</shortName>
        </alternativeName>
    </component>
    <component>
        <recommendedName>
            <fullName>Protein 3CD</fullName>
            <ecNumber>3.4.22.28</ecNumber>
        </recommendedName>
    </component>
    <component>
        <recommendedName>
            <fullName evidence="11">Protease 3C</fullName>
            <ecNumber evidence="11">3.4.22.28</ecNumber>
        </recommendedName>
        <alternativeName>
            <fullName evidence="11">Picornain 3C</fullName>
            <shortName evidence="11">P3C</shortName>
        </alternativeName>
    </component>
    <component>
        <recommendedName>
            <fullName evidence="9">RNA-directed RNA polymerase</fullName>
            <shortName>RdRp</shortName>
            <ecNumber evidence="9">2.7.7.48</ecNumber>
        </recommendedName>
        <alternativeName>
            <fullName>3D polymerase</fullName>
            <shortName>3Dpol</shortName>
        </alternativeName>
        <alternativeName>
            <fullName>Protein 3D</fullName>
            <shortName>3D</shortName>
        </alternativeName>
    </component>
</protein>
<evidence type="ECO:0000250" key="1">
    <source>
        <dbReference type="UniProtKB" id="B9VUU3"/>
    </source>
</evidence>
<evidence type="ECO:0000250" key="2">
    <source>
        <dbReference type="UniProtKB" id="P03300"/>
    </source>
</evidence>
<evidence type="ECO:0000250" key="3">
    <source>
        <dbReference type="UniProtKB" id="P03301"/>
    </source>
</evidence>
<evidence type="ECO:0000250" key="4">
    <source>
        <dbReference type="UniProtKB" id="P03313"/>
    </source>
</evidence>
<evidence type="ECO:0000250" key="5">
    <source>
        <dbReference type="UniProtKB" id="P04936"/>
    </source>
</evidence>
<evidence type="ECO:0000250" key="6">
    <source>
        <dbReference type="UniProtKB" id="Q66478"/>
    </source>
</evidence>
<evidence type="ECO:0000250" key="7">
    <source>
        <dbReference type="UniProtKB" id="Q9QF31"/>
    </source>
</evidence>
<evidence type="ECO:0000255" key="8"/>
<evidence type="ECO:0000255" key="9">
    <source>
        <dbReference type="PROSITE-ProRule" id="PRU00539"/>
    </source>
</evidence>
<evidence type="ECO:0000255" key="10">
    <source>
        <dbReference type="PROSITE-ProRule" id="PRU00551"/>
    </source>
</evidence>
<evidence type="ECO:0000255" key="11">
    <source>
        <dbReference type="PROSITE-ProRule" id="PRU01222"/>
    </source>
</evidence>
<evidence type="ECO:0000305" key="12"/>
<evidence type="ECO:0007829" key="13">
    <source>
        <dbReference type="PDB" id="1AYM"/>
    </source>
</evidence>
<evidence type="ECO:0007829" key="14">
    <source>
        <dbReference type="PDB" id="1R1A"/>
    </source>
</evidence>
<name>POLG_HRV1A</name>